<organism>
    <name type="scientific">Arabidopsis thaliana</name>
    <name type="common">Mouse-ear cress</name>
    <dbReference type="NCBI Taxonomy" id="3702"/>
    <lineage>
        <taxon>Eukaryota</taxon>
        <taxon>Viridiplantae</taxon>
        <taxon>Streptophyta</taxon>
        <taxon>Embryophyta</taxon>
        <taxon>Tracheophyta</taxon>
        <taxon>Spermatophyta</taxon>
        <taxon>Magnoliopsida</taxon>
        <taxon>eudicotyledons</taxon>
        <taxon>Gunneridae</taxon>
        <taxon>Pentapetalae</taxon>
        <taxon>rosids</taxon>
        <taxon>malvids</taxon>
        <taxon>Brassicales</taxon>
        <taxon>Brassicaceae</taxon>
        <taxon>Camelineae</taxon>
        <taxon>Arabidopsis</taxon>
    </lineage>
</organism>
<accession>Q9LUD7</accession>
<dbReference type="EC" id="2.4.1.34"/>
<dbReference type="EMBL" id="AB023038">
    <property type="protein sequence ID" value="BAB02389.1"/>
    <property type="status" value="ALT_SEQ"/>
    <property type="molecule type" value="Genomic_DNA"/>
</dbReference>
<dbReference type="EMBL" id="CP002686">
    <property type="protein sequence ID" value="AEE75539.1"/>
    <property type="molecule type" value="Genomic_DNA"/>
</dbReference>
<dbReference type="RefSeq" id="NP_188075.2">
    <molecule id="Q9LUD7-1"/>
    <property type="nucleotide sequence ID" value="NM_112317.3"/>
</dbReference>
<dbReference type="SMR" id="Q9LUD7"/>
<dbReference type="FunCoup" id="Q9LUD7">
    <property type="interactions" value="285"/>
</dbReference>
<dbReference type="STRING" id="3702.Q9LUD7"/>
<dbReference type="CAZy" id="GT48">
    <property type="family name" value="Glycosyltransferase Family 48"/>
</dbReference>
<dbReference type="TCDB" id="9.B.119.1.3">
    <property type="family name" value="the glycan synthase, fks1 (fks1) family"/>
</dbReference>
<dbReference type="GlyCosmos" id="Q9LUD7">
    <property type="glycosylation" value="1 site, No reported glycans"/>
</dbReference>
<dbReference type="GlyGen" id="Q9LUD7">
    <property type="glycosylation" value="1 site"/>
</dbReference>
<dbReference type="iPTMnet" id="Q9LUD7"/>
<dbReference type="PaxDb" id="3702-AT3G14570.1"/>
<dbReference type="EnsemblPlants" id="AT3G14570.1">
    <molecule id="Q9LUD7-1"/>
    <property type="protein sequence ID" value="AT3G14570.1"/>
    <property type="gene ID" value="AT3G14570"/>
</dbReference>
<dbReference type="GeneID" id="820683"/>
<dbReference type="Gramene" id="AT3G14570.1">
    <molecule id="Q9LUD7-1"/>
    <property type="protein sequence ID" value="AT3G14570.1"/>
    <property type="gene ID" value="AT3G14570"/>
</dbReference>
<dbReference type="KEGG" id="ath:AT3G14570"/>
<dbReference type="Araport" id="AT3G14570"/>
<dbReference type="TAIR" id="AT3G14570">
    <property type="gene designation" value="GSL04"/>
</dbReference>
<dbReference type="eggNOG" id="KOG0916">
    <property type="taxonomic scope" value="Eukaryota"/>
</dbReference>
<dbReference type="InParanoid" id="Q9LUD7"/>
<dbReference type="PhylomeDB" id="Q9LUD7"/>
<dbReference type="BioCyc" id="ARA:AT3G14570-MONOMER"/>
<dbReference type="PRO" id="PR:Q9LUD7"/>
<dbReference type="Proteomes" id="UP000006548">
    <property type="component" value="Chromosome 3"/>
</dbReference>
<dbReference type="ExpressionAtlas" id="Q9LUD7">
    <property type="expression patterns" value="baseline and differential"/>
</dbReference>
<dbReference type="GO" id="GO:0000148">
    <property type="term" value="C:1,3-beta-D-glucan synthase complex"/>
    <property type="evidence" value="ECO:0007669"/>
    <property type="project" value="InterPro"/>
</dbReference>
<dbReference type="GO" id="GO:0005886">
    <property type="term" value="C:plasma membrane"/>
    <property type="evidence" value="ECO:0007669"/>
    <property type="project" value="UniProtKB-SubCell"/>
</dbReference>
<dbReference type="GO" id="GO:0003843">
    <property type="term" value="F:1,3-beta-D-glucan synthase activity"/>
    <property type="evidence" value="ECO:0007669"/>
    <property type="project" value="UniProtKB-EC"/>
</dbReference>
<dbReference type="GO" id="GO:0006075">
    <property type="term" value="P:(1-&gt;3)-beta-D-glucan biosynthetic process"/>
    <property type="evidence" value="ECO:0007669"/>
    <property type="project" value="InterPro"/>
</dbReference>
<dbReference type="GO" id="GO:0071555">
    <property type="term" value="P:cell wall organization"/>
    <property type="evidence" value="ECO:0007669"/>
    <property type="project" value="UniProtKB-KW"/>
</dbReference>
<dbReference type="GO" id="GO:0008360">
    <property type="term" value="P:regulation of cell shape"/>
    <property type="evidence" value="ECO:0007669"/>
    <property type="project" value="UniProtKB-KW"/>
</dbReference>
<dbReference type="Gene3D" id="1.25.40.270">
    <property type="entry name" value="Vacuolar protein sorting-associated protein vta1"/>
    <property type="match status" value="1"/>
</dbReference>
<dbReference type="InterPro" id="IPR026899">
    <property type="entry name" value="FKS1-like_dom1"/>
</dbReference>
<dbReference type="InterPro" id="IPR003440">
    <property type="entry name" value="Glyco_trans_48_dom"/>
</dbReference>
<dbReference type="InterPro" id="IPR039431">
    <property type="entry name" value="Vta1/CALS_N"/>
</dbReference>
<dbReference type="InterPro" id="IPR023175">
    <property type="entry name" value="Vta1/CALS_N_sf"/>
</dbReference>
<dbReference type="PANTHER" id="PTHR12741:SF22">
    <property type="entry name" value="CALLOSE SYNTHASE 8-RELATED"/>
    <property type="match status" value="1"/>
</dbReference>
<dbReference type="PANTHER" id="PTHR12741">
    <property type="entry name" value="LYST-INTERACTING PROTEIN LIP5 DOPAMINE RESPONSIVE PROTEIN DRG-1"/>
    <property type="match status" value="1"/>
</dbReference>
<dbReference type="Pfam" id="PF14288">
    <property type="entry name" value="FKS1_dom1"/>
    <property type="match status" value="1"/>
</dbReference>
<dbReference type="Pfam" id="PF02364">
    <property type="entry name" value="Glucan_synthase"/>
    <property type="match status" value="1"/>
</dbReference>
<dbReference type="Pfam" id="PF04652">
    <property type="entry name" value="Vta1"/>
    <property type="match status" value="1"/>
</dbReference>
<dbReference type="SMART" id="SM01205">
    <property type="entry name" value="FKS1_dom1"/>
    <property type="match status" value="1"/>
</dbReference>
<comment type="function">
    <text evidence="1">Involved in callose synthesis at the forming cell plate during cytokinesis. During plant growth and development, callose is found as a transitory component of the cell plate in dividing cells, is a major component of pollen mother cell walls and pollen tubes, and is found as a structural component of plasmodesmatal canals (By similarity).</text>
</comment>
<comment type="catalytic activity">
    <reaction>
        <text>[(1-&gt;3)-beta-D-glucosyl](n) + UDP-alpha-D-glucose = [(1-&gt;3)-beta-D-glucosyl](n+1) + UDP + H(+)</text>
        <dbReference type="Rhea" id="RHEA:21476"/>
        <dbReference type="Rhea" id="RHEA-COMP:11146"/>
        <dbReference type="Rhea" id="RHEA-COMP:14303"/>
        <dbReference type="ChEBI" id="CHEBI:15378"/>
        <dbReference type="ChEBI" id="CHEBI:37671"/>
        <dbReference type="ChEBI" id="CHEBI:58223"/>
        <dbReference type="ChEBI" id="CHEBI:58885"/>
        <dbReference type="EC" id="2.4.1.34"/>
    </reaction>
</comment>
<comment type="subcellular location">
    <subcellularLocation>
        <location evidence="3">Cell membrane</location>
        <topology evidence="3">Multi-pass membrane protein</topology>
    </subcellularLocation>
</comment>
<comment type="alternative products">
    <event type="alternative splicing"/>
    <isoform>
        <id>Q9LUD7-1</id>
        <name>1</name>
        <sequence type="displayed"/>
    </isoform>
    <text>A number of isoforms are produced. According to EST sequences.</text>
</comment>
<comment type="similarity">
    <text evidence="3">Belongs to the glycosyltransferase 48 family.</text>
</comment>
<comment type="sequence caution" evidence="3">
    <conflict type="erroneous gene model prediction">
        <sequence resource="EMBL-CDS" id="BAB02389"/>
    </conflict>
</comment>
<protein>
    <recommendedName>
        <fullName>Putative callose synthase 8</fullName>
        <ecNumber>2.4.1.34</ecNumber>
    </recommendedName>
    <alternativeName>
        <fullName>1,3-beta-glucan synthase</fullName>
    </alternativeName>
    <alternativeName>
        <fullName>Protein GLUCAN SYNTHASE-LIKE 4</fullName>
    </alternativeName>
</protein>
<gene>
    <name type="primary">CALS8</name>
    <name type="synonym">GSL4</name>
    <name type="ordered locus">At3g14570</name>
    <name type="ORF">MIE1.7</name>
</gene>
<evidence type="ECO:0000250" key="1"/>
<evidence type="ECO:0000255" key="2"/>
<evidence type="ECO:0000305" key="3"/>
<name>CALS8_ARATH</name>
<feature type="chain" id="PRO_0000334580" description="Putative callose synthase 8">
    <location>
        <begin position="1"/>
        <end position="1976"/>
    </location>
</feature>
<feature type="topological domain" description="Cytoplasmic" evidence="2">
    <location>
        <begin position="1"/>
        <end position="530"/>
    </location>
</feature>
<feature type="transmembrane region" description="Helical" evidence="2">
    <location>
        <begin position="531"/>
        <end position="551"/>
    </location>
</feature>
<feature type="topological domain" description="Extracellular" evidence="2">
    <location>
        <begin position="552"/>
        <end position="565"/>
    </location>
</feature>
<feature type="transmembrane region" description="Helical" evidence="2">
    <location>
        <begin position="566"/>
        <end position="586"/>
    </location>
</feature>
<feature type="topological domain" description="Cytoplasmic" evidence="2">
    <location>
        <begin position="587"/>
        <end position="602"/>
    </location>
</feature>
<feature type="transmembrane region" description="Helical" evidence="2">
    <location>
        <begin position="603"/>
        <end position="623"/>
    </location>
</feature>
<feature type="topological domain" description="Extracellular" evidence="2">
    <location>
        <begin position="624"/>
        <end position="648"/>
    </location>
</feature>
<feature type="transmembrane region" description="Helical" evidence="2">
    <location>
        <begin position="649"/>
        <end position="669"/>
    </location>
</feature>
<feature type="topological domain" description="Cytoplasmic" evidence="2">
    <location>
        <begin position="670"/>
        <end position="707"/>
    </location>
</feature>
<feature type="transmembrane region" description="Helical" evidence="2">
    <location>
        <begin position="708"/>
        <end position="728"/>
    </location>
</feature>
<feature type="topological domain" description="Extracellular" evidence="2">
    <location>
        <begin position="729"/>
        <end position="759"/>
    </location>
</feature>
<feature type="transmembrane region" description="Helical" evidence="2">
    <location>
        <begin position="760"/>
        <end position="780"/>
    </location>
</feature>
<feature type="topological domain" description="Cytoplasmic" evidence="2">
    <location>
        <begin position="781"/>
        <end position="1544"/>
    </location>
</feature>
<feature type="transmembrane region" description="Helical" evidence="2">
    <location>
        <begin position="1545"/>
        <end position="1565"/>
    </location>
</feature>
<feature type="topological domain" description="Extracellular" evidence="2">
    <location>
        <begin position="1566"/>
        <end position="1595"/>
    </location>
</feature>
<feature type="transmembrane region" description="Helical" evidence="2">
    <location>
        <begin position="1596"/>
        <end position="1616"/>
    </location>
</feature>
<feature type="topological domain" description="Cytoplasmic" evidence="2">
    <location>
        <begin position="1617"/>
        <end position="1620"/>
    </location>
</feature>
<feature type="transmembrane region" description="Helical" evidence="2">
    <location>
        <begin position="1621"/>
        <end position="1641"/>
    </location>
</feature>
<feature type="topological domain" description="Extracellular" evidence="2">
    <location>
        <begin position="1642"/>
        <end position="1688"/>
    </location>
</feature>
<feature type="transmembrane region" description="Helical" evidence="2">
    <location>
        <begin position="1689"/>
        <end position="1709"/>
    </location>
</feature>
<feature type="topological domain" description="Cytoplasmic" evidence="2">
    <location>
        <begin position="1710"/>
        <end position="1715"/>
    </location>
</feature>
<feature type="transmembrane region" description="Helical" evidence="2">
    <location>
        <begin position="1716"/>
        <end position="1736"/>
    </location>
</feature>
<feature type="topological domain" description="Extracellular" evidence="2">
    <location>
        <begin position="1737"/>
        <end position="1790"/>
    </location>
</feature>
<feature type="transmembrane region" description="Helical" evidence="2">
    <location>
        <begin position="1791"/>
        <end position="1811"/>
    </location>
</feature>
<feature type="topological domain" description="Cytoplasmic" evidence="2">
    <location>
        <begin position="1812"/>
        <end position="1819"/>
    </location>
</feature>
<feature type="transmembrane region" description="Helical" evidence="2">
    <location>
        <begin position="1820"/>
        <end position="1840"/>
    </location>
</feature>
<feature type="topological domain" description="Extracellular" evidence="2">
    <location>
        <begin position="1841"/>
        <end position="1856"/>
    </location>
</feature>
<feature type="transmembrane region" description="Helical" evidence="2">
    <location>
        <begin position="1857"/>
        <end position="1877"/>
    </location>
</feature>
<feature type="topological domain" description="Cytoplasmic" evidence="2">
    <location>
        <begin position="1878"/>
        <end position="1884"/>
    </location>
</feature>
<feature type="transmembrane region" description="Helical" evidence="2">
    <location>
        <begin position="1885"/>
        <end position="1905"/>
    </location>
</feature>
<feature type="topological domain" description="Extracellular" evidence="2">
    <location>
        <begin position="1906"/>
        <end position="1928"/>
    </location>
</feature>
<feature type="transmembrane region" description="Helical" evidence="2">
    <location>
        <begin position="1929"/>
        <end position="1949"/>
    </location>
</feature>
<feature type="topological domain" description="Cytoplasmic" evidence="2">
    <location>
        <begin position="1950"/>
        <end position="1976"/>
    </location>
</feature>
<feature type="glycosylation site" description="N-linked (GlcNAc...) asparagine" evidence="2">
    <location>
        <position position="1676"/>
    </location>
</feature>
<keyword id="KW-0025">Alternative splicing</keyword>
<keyword id="KW-1003">Cell membrane</keyword>
<keyword id="KW-0133">Cell shape</keyword>
<keyword id="KW-0961">Cell wall biogenesis/degradation</keyword>
<keyword id="KW-0325">Glycoprotein</keyword>
<keyword id="KW-0328">Glycosyltransferase</keyword>
<keyword id="KW-0472">Membrane</keyword>
<keyword id="KW-1185">Reference proteome</keyword>
<keyword id="KW-0808">Transferase</keyword>
<keyword id="KW-0812">Transmembrane</keyword>
<keyword id="KW-1133">Transmembrane helix</keyword>
<sequence>MSHEIVPVDPIDVPSTSYSRPILGPREDSPERATEFTRSLTFREHVSSEPFDSERLPATLASEIQRFLRIANLVESEEPRIAYLCRFHAFEIAHHMDRNSTGRGVRQFKTSLLQRLELDEEFTVRRRKEKSDVRELKRVYHAYKEYIIRHGAAFNLDNSQREKLINARRIASVLYEVLKTVTSGAGPQAIADRESIRAKSEFYVPYNILPLDKGGVHQAIMHLPEIKAAVAIVRNTRGLPPPEEFQRHQPFLDLFEFLQYAFGFQNGNVANQREHLILLLSNTIIRQPQKQSSAPKSGDEAVDALMKKFFKNYTNWCKFLGRKNNIRLPYVKQEALQYKTLYIGLYLLIWGEASNLRFMPECLCYIFHHMAYELHGVLTGAVSMITGEKVAPAYGGGHESFLADVVTPIYMVVQKEAEKNKNGTADHSMWRNYDDLNEFFWSLECFEIGWPMRPEHDFFCVESSETSKPGRWRGMLRFRKQTKKTDEEIEDDEELGVLSEEQPKPTSRWLGKTNFVETRSFWQIFRSFDRMWSFFVLSLQALIIMACHDVGSPLQVFNANIFEDVMSIFITSAILKLIKGILDIIFKWKARNTMPINEKKKRLVKLGFAAMWTIILPVLYSHSRRKYICYFTNYKTWLGEWCFSPYMVAVTIYLTGSAIELVLFFVPAISKYIETSNHGIFKTLSWWGQPRLYVGRGMQETQVSQFKYTFFWILVLLTKFAFSYAFEIKPLIEPTRLIMKVGVRNYEWHEIFPEVKSNAAAIVAVWAPIMVVYFMDTQIWYSVYCTIFGGLYGVLHHLGEIRTLGMLRGRFHTLPSAFNASLIPHSTKDEKRRKQRGFFPFNLGRGSDGQKNSMAKFVLVWNQVINSFRTEDLISNKELDLMTMPLSSEVLSGIIRWPIFLLANKFSTALSIAKDFVGKDEVLYRRIRKDEYMYYAVKECYESLKYILQILVVGDLEKKIISGIINEIEESIRQSSLLEEFKMAELPALHDKCIELVQLLVEGSAEQLQVEKSEELHGKLVKALQDIFELVTNDMMVHGDRILDLLQSREGSGEDTGIFMRVIEPQLFESYGEWRCIHFPLPDSASLSEQIQRFLLLLTVKDSAMDIPENLDARRRLSFFATSLFMDMPDAPKVRNMMSFSVLTPHYQEDINYSTNELHSTKSSVSIIFYMQKIFPDEWKNFLERMGCDNLDALKKEGKEEELRNWASFRGQTLSRTVRGMMYCREALKLQAFLDMADDEDILEGYKDVERSNRPLAAQLDALADMKFTYVVSCQMFGAQKSSGDPHAQDILDLMIKYPSLRVAYVEEREEIVLDVPKKVYYSILVKAVNGFDQEIYRVKLPGPPNIGEGKPENQNHAIVFTRGEALQTIDMNQDHYLEEAFKMRNLLQEFLRNRGRRPPTILGLREHIFTGSVSSLAWFMSYQETSFVTIGQRLLANPLRVRFHYGHPDVFDRIFHITRGGISKSSRTINLSEDVFAGYNTTLRRGCITYNEYLQVGKGRDVGLNQISKFEAKVANGNSEQTISRDIYRLGQRFDFFRMLSCYFTTIGFYFSSLISVIGIYIYLYGQLYLVLSGLQKTLILEAKVKNIKSLETALASQSFIQLGLLTGLPMVMEIGLEKGFLIAFQDFILMQLQLAAFFFTFSLGTKTHYFGRTILHGGAKYRPTGRKVVVFHANFSENYRLYSRSHFIKGFELMILLVVYELFKHTSQSNMAYSFITFSVWFMSFTWLCAPFLFNPSGFTWEIIVGDWRDWNRWIKEQGGIGIQQDKSWQSWWNDEQAHLRGSGVGARCLEIILSLRFFVYQYGLVYHLDITQSNTNIIVYALSWVVILATFFTVKAVDLGRQLFSTRKHLVFRFFKVFVFVSILTIIITLANICHLSVKDLLVSCLAFLPTGWGLILIAQAVRPKIEGTSLWEFTQVLARAYDYGMGVVLFAPMAILAWLPIISAFQTRFLFNEAFNRRLQIQPILAGKKKNR</sequence>
<proteinExistence type="inferred from homology"/>
<reference key="1">
    <citation type="journal article" date="2000" name="DNA Res.">
        <title>Structural analysis of Arabidopsis thaliana chromosome 3. I. Sequence features of the regions of 4,504,864 bp covered by sixty P1 and TAC clones.</title>
        <authorList>
            <person name="Sato S."/>
            <person name="Nakamura Y."/>
            <person name="Kaneko T."/>
            <person name="Katoh T."/>
            <person name="Asamizu E."/>
            <person name="Tabata S."/>
        </authorList>
    </citation>
    <scope>NUCLEOTIDE SEQUENCE [LARGE SCALE GENOMIC DNA]</scope>
    <source>
        <strain>cv. Columbia</strain>
    </source>
</reference>
<reference key="2">
    <citation type="journal article" date="2017" name="Plant J.">
        <title>Araport11: a complete reannotation of the Arabidopsis thaliana reference genome.</title>
        <authorList>
            <person name="Cheng C.Y."/>
            <person name="Krishnakumar V."/>
            <person name="Chan A.P."/>
            <person name="Thibaud-Nissen F."/>
            <person name="Schobel S."/>
            <person name="Town C.D."/>
        </authorList>
    </citation>
    <scope>GENOME REANNOTATION</scope>
    <source>
        <strain>cv. Columbia</strain>
    </source>
</reference>
<reference key="3">
    <citation type="journal article" date="2001" name="Plant Cell">
        <title>A cell plate-specific callose synthase and its interaction with phragmoplastin.</title>
        <authorList>
            <person name="Hong Z."/>
            <person name="Delauney A.J."/>
            <person name="Verma D.P.S."/>
        </authorList>
    </citation>
    <scope>GENE FAMILY</scope>
    <scope>NOMENCLATURE</scope>
</reference>
<reference key="4">
    <citation type="journal article" date="2005" name="Plant Mol. Biol.">
        <title>Two callose synthases, GSL1 and GSL5, play an essential and redundant role in plant and pollen development and in fertility.</title>
        <authorList>
            <person name="Enns L.C."/>
            <person name="Kanaoka M.M."/>
            <person name="Torii K.U."/>
            <person name="Comai L."/>
            <person name="Okada K."/>
            <person name="Cleland R.E."/>
        </authorList>
    </citation>
    <scope>NOMENCLATURE</scope>
</reference>